<geneLocation type="chloroplast"/>
<reference key="1">
    <citation type="journal article" date="1994" name="Proc. Natl. Acad. Sci. U.S.A.">
        <title>Loss of all ndh genes as determined by sequencing the entire chloroplast genome of the black pine Pinus thunbergii.</title>
        <authorList>
            <person name="Wakasugi T."/>
            <person name="Tsudzuki J."/>
            <person name="Ito S."/>
            <person name="Nakashima K."/>
            <person name="Tsudzuki T."/>
            <person name="Sugiura M."/>
        </authorList>
    </citation>
    <scope>NUCLEOTIDE SEQUENCE [LARGE SCALE GENOMIC DNA]</scope>
</reference>
<keyword id="KW-0150">Chloroplast</keyword>
<keyword id="KW-0934">Plastid</keyword>
<evidence type="ECO:0000305" key="1"/>
<proteinExistence type="inferred from homology"/>
<dbReference type="EMBL" id="D17510">
    <property type="protein sequence ID" value="BAA04434.1"/>
    <property type="molecule type" value="Genomic_DNA"/>
</dbReference>
<dbReference type="PIR" id="T07558">
    <property type="entry name" value="T07558"/>
</dbReference>
<dbReference type="RefSeq" id="NP_042479.1">
    <property type="nucleotide sequence ID" value="NC_001631.1"/>
</dbReference>
<dbReference type="GO" id="GO:0009507">
    <property type="term" value="C:chloroplast"/>
    <property type="evidence" value="ECO:0007669"/>
    <property type="project" value="UniProtKB-SubCell"/>
</dbReference>
<dbReference type="InterPro" id="IPR022546">
    <property type="entry name" value="Uncharacterised_Ycf68"/>
</dbReference>
<dbReference type="Pfam" id="PF10839">
    <property type="entry name" value="DUF2647"/>
    <property type="match status" value="1"/>
</dbReference>
<protein>
    <recommendedName>
        <fullName>Uncharacterized protein ycf68</fullName>
    </recommendedName>
    <alternativeName>
        <fullName>ORF 75A</fullName>
    </alternativeName>
</protein>
<feature type="chain" id="PRO_0000217398" description="Uncharacterized protein ycf68">
    <location>
        <begin position="1"/>
        <end position="75"/>
    </location>
</feature>
<comment type="subcellular location">
    <subcellularLocation>
        <location>Plastid</location>
        <location>Chloroplast</location>
    </subcellularLocation>
</comment>
<comment type="similarity">
    <text evidence="1">Belongs to the ycf68 family.</text>
</comment>
<gene>
    <name type="primary">ycf68</name>
</gene>
<sequence>MAYSSCLCEPGFGTELILRRIDGAIQVRSNTDPTFYSFVDLGGPGVPVVIHLGSSLLENPYIPYQCMDGYLSGTG</sequence>
<organism>
    <name type="scientific">Pinus thunbergii</name>
    <name type="common">Japanese black pine</name>
    <name type="synonym">Pinus thunbergiana</name>
    <dbReference type="NCBI Taxonomy" id="3350"/>
    <lineage>
        <taxon>Eukaryota</taxon>
        <taxon>Viridiplantae</taxon>
        <taxon>Streptophyta</taxon>
        <taxon>Embryophyta</taxon>
        <taxon>Tracheophyta</taxon>
        <taxon>Spermatophyta</taxon>
        <taxon>Pinopsida</taxon>
        <taxon>Pinidae</taxon>
        <taxon>Conifers I</taxon>
        <taxon>Pinales</taxon>
        <taxon>Pinaceae</taxon>
        <taxon>Pinus</taxon>
        <taxon>Pinus subgen. Pinus</taxon>
    </lineage>
</organism>
<accession>P52807</accession>
<name>YCF68_PINTH</name>